<accession>Q3ABS6</accession>
<reference key="1">
    <citation type="journal article" date="2005" name="PLoS Genet.">
        <title>Life in hot carbon monoxide: the complete genome sequence of Carboxydothermus hydrogenoformans Z-2901.</title>
        <authorList>
            <person name="Wu M."/>
            <person name="Ren Q."/>
            <person name="Durkin A.S."/>
            <person name="Daugherty S.C."/>
            <person name="Brinkac L.M."/>
            <person name="Dodson R.J."/>
            <person name="Madupu R."/>
            <person name="Sullivan S.A."/>
            <person name="Kolonay J.F."/>
            <person name="Nelson W.C."/>
            <person name="Tallon L.J."/>
            <person name="Jones K.M."/>
            <person name="Ulrich L.E."/>
            <person name="Gonzalez J.M."/>
            <person name="Zhulin I.B."/>
            <person name="Robb F.T."/>
            <person name="Eisen J.A."/>
        </authorList>
    </citation>
    <scope>NUCLEOTIDE SEQUENCE [LARGE SCALE GENOMIC DNA]</scope>
    <source>
        <strain>ATCC BAA-161 / DSM 6008 / Z-2901</strain>
    </source>
</reference>
<gene>
    <name evidence="1" type="primary">thrS</name>
    <name type="ordered locus">CHY_1579</name>
</gene>
<dbReference type="EC" id="6.1.1.3" evidence="1"/>
<dbReference type="EMBL" id="CP000141">
    <property type="protein sequence ID" value="ABB15985.1"/>
    <property type="molecule type" value="Genomic_DNA"/>
</dbReference>
<dbReference type="SMR" id="Q3ABS6"/>
<dbReference type="FunCoup" id="Q3ABS6">
    <property type="interactions" value="411"/>
</dbReference>
<dbReference type="STRING" id="246194.CHY_1579"/>
<dbReference type="KEGG" id="chy:CHY_1579"/>
<dbReference type="eggNOG" id="COG0441">
    <property type="taxonomic scope" value="Bacteria"/>
</dbReference>
<dbReference type="HOGENOM" id="CLU_008554_0_1_9"/>
<dbReference type="InParanoid" id="Q3ABS6"/>
<dbReference type="OrthoDB" id="9802304at2"/>
<dbReference type="Proteomes" id="UP000002706">
    <property type="component" value="Chromosome"/>
</dbReference>
<dbReference type="GO" id="GO:0005737">
    <property type="term" value="C:cytoplasm"/>
    <property type="evidence" value="ECO:0007669"/>
    <property type="project" value="UniProtKB-SubCell"/>
</dbReference>
<dbReference type="GO" id="GO:0005524">
    <property type="term" value="F:ATP binding"/>
    <property type="evidence" value="ECO:0007669"/>
    <property type="project" value="UniProtKB-UniRule"/>
</dbReference>
<dbReference type="GO" id="GO:0140096">
    <property type="term" value="F:catalytic activity, acting on a protein"/>
    <property type="evidence" value="ECO:0007669"/>
    <property type="project" value="UniProtKB-ARBA"/>
</dbReference>
<dbReference type="GO" id="GO:0046872">
    <property type="term" value="F:metal ion binding"/>
    <property type="evidence" value="ECO:0007669"/>
    <property type="project" value="UniProtKB-KW"/>
</dbReference>
<dbReference type="GO" id="GO:0004829">
    <property type="term" value="F:threonine-tRNA ligase activity"/>
    <property type="evidence" value="ECO:0007669"/>
    <property type="project" value="UniProtKB-UniRule"/>
</dbReference>
<dbReference type="GO" id="GO:0016740">
    <property type="term" value="F:transferase activity"/>
    <property type="evidence" value="ECO:0007669"/>
    <property type="project" value="UniProtKB-ARBA"/>
</dbReference>
<dbReference type="GO" id="GO:0000049">
    <property type="term" value="F:tRNA binding"/>
    <property type="evidence" value="ECO:0007669"/>
    <property type="project" value="UniProtKB-KW"/>
</dbReference>
<dbReference type="GO" id="GO:0006435">
    <property type="term" value="P:threonyl-tRNA aminoacylation"/>
    <property type="evidence" value="ECO:0007669"/>
    <property type="project" value="UniProtKB-UniRule"/>
</dbReference>
<dbReference type="CDD" id="cd01667">
    <property type="entry name" value="TGS_ThrRS"/>
    <property type="match status" value="1"/>
</dbReference>
<dbReference type="CDD" id="cd00860">
    <property type="entry name" value="ThrRS_anticodon"/>
    <property type="match status" value="1"/>
</dbReference>
<dbReference type="CDD" id="cd00771">
    <property type="entry name" value="ThrRS_core"/>
    <property type="match status" value="1"/>
</dbReference>
<dbReference type="FunFam" id="3.30.54.20:FF:000002">
    <property type="entry name" value="Threonine--tRNA ligase"/>
    <property type="match status" value="1"/>
</dbReference>
<dbReference type="FunFam" id="3.30.930.10:FF:000002">
    <property type="entry name" value="Threonine--tRNA ligase"/>
    <property type="match status" value="1"/>
</dbReference>
<dbReference type="FunFam" id="3.40.50.800:FF:000001">
    <property type="entry name" value="Threonine--tRNA ligase"/>
    <property type="match status" value="1"/>
</dbReference>
<dbReference type="FunFam" id="3.30.980.10:FF:000005">
    <property type="entry name" value="Threonyl-tRNA synthetase, mitochondrial"/>
    <property type="match status" value="1"/>
</dbReference>
<dbReference type="Gene3D" id="3.10.20.30">
    <property type="match status" value="1"/>
</dbReference>
<dbReference type="Gene3D" id="3.30.54.20">
    <property type="match status" value="1"/>
</dbReference>
<dbReference type="Gene3D" id="3.40.50.800">
    <property type="entry name" value="Anticodon-binding domain"/>
    <property type="match status" value="1"/>
</dbReference>
<dbReference type="Gene3D" id="3.30.930.10">
    <property type="entry name" value="Bira Bifunctional Protein, Domain 2"/>
    <property type="match status" value="1"/>
</dbReference>
<dbReference type="Gene3D" id="3.30.980.10">
    <property type="entry name" value="Threonyl-trna Synthetase, Chain A, domain 2"/>
    <property type="match status" value="1"/>
</dbReference>
<dbReference type="HAMAP" id="MF_00184">
    <property type="entry name" value="Thr_tRNA_synth"/>
    <property type="match status" value="1"/>
</dbReference>
<dbReference type="InterPro" id="IPR002314">
    <property type="entry name" value="aa-tRNA-synt_IIb"/>
</dbReference>
<dbReference type="InterPro" id="IPR006195">
    <property type="entry name" value="aa-tRNA-synth_II"/>
</dbReference>
<dbReference type="InterPro" id="IPR045864">
    <property type="entry name" value="aa-tRNA-synth_II/BPL/LPL"/>
</dbReference>
<dbReference type="InterPro" id="IPR004154">
    <property type="entry name" value="Anticodon-bd"/>
</dbReference>
<dbReference type="InterPro" id="IPR036621">
    <property type="entry name" value="Anticodon-bd_dom_sf"/>
</dbReference>
<dbReference type="InterPro" id="IPR012675">
    <property type="entry name" value="Beta-grasp_dom_sf"/>
</dbReference>
<dbReference type="InterPro" id="IPR004095">
    <property type="entry name" value="TGS"/>
</dbReference>
<dbReference type="InterPro" id="IPR012676">
    <property type="entry name" value="TGS-like"/>
</dbReference>
<dbReference type="InterPro" id="IPR002320">
    <property type="entry name" value="Thr-tRNA-ligase_IIa"/>
</dbReference>
<dbReference type="InterPro" id="IPR018163">
    <property type="entry name" value="Thr/Ala-tRNA-synth_IIc_edit"/>
</dbReference>
<dbReference type="InterPro" id="IPR047246">
    <property type="entry name" value="ThrRS_anticodon"/>
</dbReference>
<dbReference type="InterPro" id="IPR033728">
    <property type="entry name" value="ThrRS_core"/>
</dbReference>
<dbReference type="InterPro" id="IPR012947">
    <property type="entry name" value="tRNA_SAD"/>
</dbReference>
<dbReference type="NCBIfam" id="TIGR00418">
    <property type="entry name" value="thrS"/>
    <property type="match status" value="1"/>
</dbReference>
<dbReference type="PANTHER" id="PTHR11451:SF44">
    <property type="entry name" value="THREONINE--TRNA LIGASE, CHLOROPLASTIC_MITOCHONDRIAL 2"/>
    <property type="match status" value="1"/>
</dbReference>
<dbReference type="PANTHER" id="PTHR11451">
    <property type="entry name" value="THREONINE-TRNA LIGASE"/>
    <property type="match status" value="1"/>
</dbReference>
<dbReference type="Pfam" id="PF03129">
    <property type="entry name" value="HGTP_anticodon"/>
    <property type="match status" value="1"/>
</dbReference>
<dbReference type="Pfam" id="PF02824">
    <property type="entry name" value="TGS"/>
    <property type="match status" value="1"/>
</dbReference>
<dbReference type="Pfam" id="PF00587">
    <property type="entry name" value="tRNA-synt_2b"/>
    <property type="match status" value="1"/>
</dbReference>
<dbReference type="Pfam" id="PF07973">
    <property type="entry name" value="tRNA_SAD"/>
    <property type="match status" value="1"/>
</dbReference>
<dbReference type="PRINTS" id="PR01047">
    <property type="entry name" value="TRNASYNTHTHR"/>
</dbReference>
<dbReference type="SMART" id="SM00863">
    <property type="entry name" value="tRNA_SAD"/>
    <property type="match status" value="1"/>
</dbReference>
<dbReference type="SUPFAM" id="SSF52954">
    <property type="entry name" value="Class II aaRS ABD-related"/>
    <property type="match status" value="1"/>
</dbReference>
<dbReference type="SUPFAM" id="SSF55681">
    <property type="entry name" value="Class II aaRS and biotin synthetases"/>
    <property type="match status" value="1"/>
</dbReference>
<dbReference type="SUPFAM" id="SSF81271">
    <property type="entry name" value="TGS-like"/>
    <property type="match status" value="1"/>
</dbReference>
<dbReference type="SUPFAM" id="SSF55186">
    <property type="entry name" value="ThrRS/AlaRS common domain"/>
    <property type="match status" value="1"/>
</dbReference>
<dbReference type="PROSITE" id="PS50862">
    <property type="entry name" value="AA_TRNA_LIGASE_II"/>
    <property type="match status" value="1"/>
</dbReference>
<dbReference type="PROSITE" id="PS51880">
    <property type="entry name" value="TGS"/>
    <property type="match status" value="1"/>
</dbReference>
<name>SYT_CARHZ</name>
<organism>
    <name type="scientific">Carboxydothermus hydrogenoformans (strain ATCC BAA-161 / DSM 6008 / Z-2901)</name>
    <dbReference type="NCBI Taxonomy" id="246194"/>
    <lineage>
        <taxon>Bacteria</taxon>
        <taxon>Bacillati</taxon>
        <taxon>Bacillota</taxon>
        <taxon>Clostridia</taxon>
        <taxon>Thermoanaerobacterales</taxon>
        <taxon>Thermoanaerobacteraceae</taxon>
        <taxon>Carboxydothermus</taxon>
    </lineage>
</organism>
<feature type="chain" id="PRO_1000077351" description="Threonine--tRNA ligase">
    <location>
        <begin position="1"/>
        <end position="634"/>
    </location>
</feature>
<feature type="domain" description="TGS" evidence="2">
    <location>
        <begin position="1"/>
        <end position="61"/>
    </location>
</feature>
<feature type="region of interest" description="Catalytic" evidence="1">
    <location>
        <begin position="242"/>
        <end position="532"/>
    </location>
</feature>
<feature type="binding site" evidence="1">
    <location>
        <position position="333"/>
    </location>
    <ligand>
        <name>Zn(2+)</name>
        <dbReference type="ChEBI" id="CHEBI:29105"/>
    </ligand>
</feature>
<feature type="binding site" evidence="1">
    <location>
        <position position="384"/>
    </location>
    <ligand>
        <name>Zn(2+)</name>
        <dbReference type="ChEBI" id="CHEBI:29105"/>
    </ligand>
</feature>
<feature type="binding site" evidence="1">
    <location>
        <position position="509"/>
    </location>
    <ligand>
        <name>Zn(2+)</name>
        <dbReference type="ChEBI" id="CHEBI:29105"/>
    </ligand>
</feature>
<keyword id="KW-0030">Aminoacyl-tRNA synthetase</keyword>
<keyword id="KW-0067">ATP-binding</keyword>
<keyword id="KW-0963">Cytoplasm</keyword>
<keyword id="KW-0436">Ligase</keyword>
<keyword id="KW-0479">Metal-binding</keyword>
<keyword id="KW-0547">Nucleotide-binding</keyword>
<keyword id="KW-0648">Protein biosynthesis</keyword>
<keyword id="KW-1185">Reference proteome</keyword>
<keyword id="KW-0694">RNA-binding</keyword>
<keyword id="KW-0820">tRNA-binding</keyword>
<keyword id="KW-0862">Zinc</keyword>
<comment type="function">
    <text evidence="1">Catalyzes the attachment of threonine to tRNA(Thr) in a two-step reaction: L-threonine is first activated by ATP to form Thr-AMP and then transferred to the acceptor end of tRNA(Thr). Also edits incorrectly charged L-seryl-tRNA(Thr).</text>
</comment>
<comment type="catalytic activity">
    <reaction evidence="1">
        <text>tRNA(Thr) + L-threonine + ATP = L-threonyl-tRNA(Thr) + AMP + diphosphate + H(+)</text>
        <dbReference type="Rhea" id="RHEA:24624"/>
        <dbReference type="Rhea" id="RHEA-COMP:9670"/>
        <dbReference type="Rhea" id="RHEA-COMP:9704"/>
        <dbReference type="ChEBI" id="CHEBI:15378"/>
        <dbReference type="ChEBI" id="CHEBI:30616"/>
        <dbReference type="ChEBI" id="CHEBI:33019"/>
        <dbReference type="ChEBI" id="CHEBI:57926"/>
        <dbReference type="ChEBI" id="CHEBI:78442"/>
        <dbReference type="ChEBI" id="CHEBI:78534"/>
        <dbReference type="ChEBI" id="CHEBI:456215"/>
        <dbReference type="EC" id="6.1.1.3"/>
    </reaction>
</comment>
<comment type="cofactor">
    <cofactor evidence="1">
        <name>Zn(2+)</name>
        <dbReference type="ChEBI" id="CHEBI:29105"/>
    </cofactor>
    <text evidence="1">Binds 1 zinc ion per subunit.</text>
</comment>
<comment type="subunit">
    <text evidence="1">Homodimer.</text>
</comment>
<comment type="subcellular location">
    <subcellularLocation>
        <location evidence="1">Cytoplasm</location>
    </subcellularLocation>
</comment>
<comment type="similarity">
    <text evidence="1">Belongs to the class-II aminoacyl-tRNA synthetase family.</text>
</comment>
<proteinExistence type="inferred from homology"/>
<protein>
    <recommendedName>
        <fullName evidence="1">Threonine--tRNA ligase</fullName>
        <ecNumber evidence="1">6.1.1.3</ecNumber>
    </recommendedName>
    <alternativeName>
        <fullName evidence="1">Threonyl-tRNA synthetase</fullName>
        <shortName evidence="1">ThrRS</shortName>
    </alternativeName>
</protein>
<sequence>MISLKFPNNEVREFPENITALEVAKTLSPRLAKEALCASINGKLIDLSQKISESGEFRLYTFEDDEGKDVFRHSSAHLMAQAVKRLFPKTKLAIGPAIKDGFYYDFDPEESFSPEDLEKIEAEMEKIVKEDLPIERFVLSRDEAIKFFEEKGEIYKVELVKDIPEGVEISFYRQGEFVDLCTGPHVPSTGYLKAFKLLNIAGAYWRGNEKNKMLQRIYGVSFPKKSMLTDYLNFLEEAKKRDHRKIGQELDLFSLQEEGPGFPFFHPKGMVIRNELENFWREKHRLAGYQEIKTPIILNRELWERSGHWAHYKENMYFTKIDDQDYAIKPMNCPGSILVYKNKLHSYREFPIRLAELGLVHRHELSGVLHGLMRVRCFTQDDAHIFMLPEQVKDEIIGVINLIDEFYRLFGFEYHVELSTRPENSMGSDELWELATNSLKEALEERGLPYKINEGDGAFYGPKIDFHLKDCLGRTWQCGTIQLDFQMPEKFDLTYIGEDGQKHRPVMIHRVVFGSIERFIGILIEHYAGAFPVWLSPVQVRVITVAERHREYGQEIYQKLFNQGVRVELDDRNETIGYKIREGQMQKIPYLLIVGDKEIEQGSVAVRKRGVGDLGQKPFAEFIEELLAEIREKR</sequence>
<evidence type="ECO:0000255" key="1">
    <source>
        <dbReference type="HAMAP-Rule" id="MF_00184"/>
    </source>
</evidence>
<evidence type="ECO:0000255" key="2">
    <source>
        <dbReference type="PROSITE-ProRule" id="PRU01228"/>
    </source>
</evidence>